<accession>Q9Z0M6</accession>
<accession>Q923A1</accession>
<accession>Q9CVI5</accession>
<accession>Q9JLQ8</accession>
<organism>
    <name type="scientific">Mus musculus</name>
    <name type="common">Mouse</name>
    <dbReference type="NCBI Taxonomy" id="10090"/>
    <lineage>
        <taxon>Eukaryota</taxon>
        <taxon>Metazoa</taxon>
        <taxon>Chordata</taxon>
        <taxon>Craniata</taxon>
        <taxon>Vertebrata</taxon>
        <taxon>Euteleostomi</taxon>
        <taxon>Mammalia</taxon>
        <taxon>Eutheria</taxon>
        <taxon>Euarchontoglires</taxon>
        <taxon>Glires</taxon>
        <taxon>Rodentia</taxon>
        <taxon>Myomorpha</taxon>
        <taxon>Muroidea</taxon>
        <taxon>Muridae</taxon>
        <taxon>Murinae</taxon>
        <taxon>Mus</taxon>
        <taxon>Mus</taxon>
    </lineage>
</organism>
<comment type="function">
    <text evidence="8">Receptor potentially involved in both adhesion and signaling processes early after leukocyte activation. Plays an essential role in leukocyte migration.</text>
</comment>
<comment type="subunit">
    <text evidence="1">Forms a heterodimer, consisting of a large extracellular region (alpha subunit) non-covalently linked to a seven-transmembrane moiety (beta subunit). Interacts with complement decay-accelerating factor (DAF). The largest isoform (isoform 1) do not interact with DAF. Also interacts with chondroitin sulfate (By similarity).</text>
</comment>
<comment type="subcellular location">
    <subcellularLocation>
        <location evidence="7">Cell membrane</location>
        <topology evidence="3">Multi-pass membrane protein</topology>
    </subcellularLocation>
</comment>
<comment type="subcellular location">
    <molecule>Adhesion G protein-coupled receptor E5 subunit alpha</molecule>
    <subcellularLocation>
        <location evidence="14">Secreted</location>
        <location evidence="14">Extracellular space</location>
    </subcellularLocation>
</comment>
<comment type="alternative products">
    <event type="alternative splicing"/>
    <isoform>
        <id>Q9Z0M6-1</id>
        <name>1</name>
        <name>EGF(1,2,X,3,4)</name>
        <sequence type="displayed"/>
    </isoform>
    <isoform>
        <id>Q9Z0M6-2</id>
        <name>2</name>
        <name>EGF(1,2,4)</name>
        <sequence type="described" ref="VSP_009413"/>
    </isoform>
    <isoform>
        <id>Q9Z0M6-3</id>
        <name>3</name>
        <name>EGF(1,2,3,4)</name>
        <sequence type="described" ref="VSP_009414"/>
    </isoform>
</comment>
<comment type="tissue specificity">
    <text>Although predominantly expressed by cells of the immune system, expressed ubiquitously with particularly high levels of expression in the lung and the thymus gland. In the spleen, expression is detected on most myeloid cells and variable portions of T-cells, B-cells and NK cells. In the bone marrow, expressed in nearly all myeloid cells, whereas little if any expression is found on erythroid cells.</text>
</comment>
<comment type="induction">
    <text>Up-regulated during lymphocyte activation.</text>
</comment>
<comment type="domain">
    <text evidence="1">The first two EGF domains mediate the interaction with DAF. A third tandemly arranged EGF domain is necessary for the structural integrity of the binding region (By similarity).</text>
</comment>
<comment type="domain">
    <text evidence="1">Binding to chondroitin sulfate is mediated by the fourth EGF domain.</text>
</comment>
<comment type="PTM">
    <text evidence="1">Proteolytically cleaved into 2 subunits, an extracellular alpha subunit and a seven-transmembrane subunit.</text>
</comment>
<comment type="similarity">
    <text evidence="14">Belongs to the G-protein coupled receptor 2 family. LN-TM7 subfamily.</text>
</comment>
<feature type="signal peptide" evidence="3">
    <location>
        <begin position="1"/>
        <end position="23"/>
    </location>
</feature>
<feature type="chain" id="PRO_0000012869" description="Adhesion G protein-coupled receptor E5">
    <location>
        <begin position="24"/>
        <end position="818"/>
    </location>
</feature>
<feature type="chain" id="PRO_0000435126" description="Adhesion G protein-coupled receptor E5 subunit alpha" evidence="1">
    <location>
        <begin position="24"/>
        <end position="513"/>
    </location>
</feature>
<feature type="chain" id="PRO_0000435127" description="Adhesion G protein-coupled receptor E5 subunit beta" evidence="1">
    <location>
        <begin position="514"/>
        <end position="818"/>
    </location>
</feature>
<feature type="topological domain" description="Extracellular" evidence="3">
    <location>
        <begin position="24"/>
        <end position="533"/>
    </location>
</feature>
<feature type="transmembrane region" description="Helical; Name=1" evidence="3">
    <location>
        <begin position="534"/>
        <end position="554"/>
    </location>
</feature>
<feature type="topological domain" description="Cytoplasmic" evidence="3">
    <location>
        <begin position="555"/>
        <end position="562"/>
    </location>
</feature>
<feature type="transmembrane region" description="Helical; Name=2" evidence="3">
    <location>
        <begin position="563"/>
        <end position="583"/>
    </location>
</feature>
<feature type="topological domain" description="Extracellular" evidence="3">
    <location>
        <begin position="584"/>
        <end position="602"/>
    </location>
</feature>
<feature type="transmembrane region" description="Helical; Name=3" evidence="3">
    <location>
        <begin position="603"/>
        <end position="623"/>
    </location>
</feature>
<feature type="topological domain" description="Cytoplasmic" evidence="3">
    <location>
        <begin position="624"/>
        <end position="637"/>
    </location>
</feature>
<feature type="transmembrane region" description="Helical; Name=4" evidence="3">
    <location>
        <begin position="638"/>
        <end position="658"/>
    </location>
</feature>
<feature type="topological domain" description="Extracellular" evidence="3">
    <location>
        <begin position="659"/>
        <end position="679"/>
    </location>
</feature>
<feature type="transmembrane region" description="Helical; Name=5" evidence="3">
    <location>
        <begin position="680"/>
        <end position="700"/>
    </location>
</feature>
<feature type="topological domain" description="Cytoplasmic" evidence="3">
    <location>
        <begin position="701"/>
        <end position="723"/>
    </location>
</feature>
<feature type="transmembrane region" description="Helical; Name=6" evidence="3">
    <location>
        <begin position="724"/>
        <end position="744"/>
    </location>
</feature>
<feature type="topological domain" description="Extracellular" evidence="3">
    <location>
        <begin position="745"/>
        <end position="752"/>
    </location>
</feature>
<feature type="transmembrane region" description="Helical; Name=7" evidence="3">
    <location>
        <begin position="753"/>
        <end position="773"/>
    </location>
</feature>
<feature type="topological domain" description="Cytoplasmic" evidence="3">
    <location>
        <begin position="774"/>
        <end position="818"/>
    </location>
</feature>
<feature type="domain" description="EGF-like 1" evidence="4">
    <location>
        <begin position="27"/>
        <end position="68"/>
    </location>
</feature>
<feature type="domain" description="EGF-like 2; calcium-binding" evidence="4">
    <location>
        <begin position="69"/>
        <end position="119"/>
    </location>
</feature>
<feature type="domain" description="EGF-like 3; calcium-binding" evidence="4">
    <location>
        <begin position="165"/>
        <end position="213"/>
    </location>
</feature>
<feature type="domain" description="EGF-like 4; calcium-binding" evidence="4">
    <location>
        <begin position="214"/>
        <end position="261"/>
    </location>
</feature>
<feature type="domain" description="GAIN-B" evidence="5">
    <location>
        <begin position="347"/>
        <end position="525"/>
    </location>
</feature>
<feature type="region of interest" description="GPS" evidence="5">
    <location>
        <begin position="482"/>
        <end position="525"/>
    </location>
</feature>
<feature type="region of interest" description="Disordered" evidence="6">
    <location>
        <begin position="799"/>
        <end position="818"/>
    </location>
</feature>
<feature type="compositionally biased region" description="Low complexity" evidence="6">
    <location>
        <begin position="799"/>
        <end position="808"/>
    </location>
</feature>
<feature type="compositionally biased region" description="Polar residues" evidence="6">
    <location>
        <begin position="809"/>
        <end position="818"/>
    </location>
</feature>
<feature type="site" description="Cleavage; by autolysis" evidence="5">
    <location>
        <begin position="512"/>
        <end position="513"/>
    </location>
</feature>
<feature type="modified residue" description="Phosphoserine" evidence="16">
    <location>
        <position position="425"/>
    </location>
</feature>
<feature type="modified residue" description="Phosphoserine" evidence="2">
    <location>
        <position position="798"/>
    </location>
</feature>
<feature type="modified residue" description="Phosphothreonine" evidence="2">
    <location>
        <position position="808"/>
    </location>
</feature>
<feature type="modified residue" description="Phosphoserine" evidence="16">
    <location>
        <position position="814"/>
    </location>
</feature>
<feature type="modified residue" description="Phosphoserine" evidence="2">
    <location>
        <position position="816"/>
    </location>
</feature>
<feature type="glycosylation site" description="N-linked (GlcNAc...) asparagine" evidence="3">
    <location>
        <position position="44"/>
    </location>
</feature>
<feature type="glycosylation site" description="N-linked (GlcNAc...) asparagine" evidence="3">
    <location>
        <position position="112"/>
    </location>
</feature>
<feature type="glycosylation site" description="N-linked (GlcNAc...) asparagine" evidence="3">
    <location>
        <position position="227"/>
    </location>
</feature>
<feature type="glycosylation site" description="N-linked (GlcNAc...) asparagine" evidence="9 10">
    <location>
        <position position="299"/>
    </location>
</feature>
<feature type="glycosylation site" description="N-linked (GlcNAc...) asparagine" evidence="9 10">
    <location>
        <position position="395"/>
    </location>
</feature>
<feature type="glycosylation site" description="N-linked (GlcNAc...) asparagine" evidence="10">
    <location>
        <position position="461"/>
    </location>
</feature>
<feature type="glycosylation site" description="N-linked (GlcNAc...) asparagine" evidence="3">
    <location>
        <position position="502"/>
    </location>
</feature>
<feature type="disulfide bond" evidence="4">
    <location>
        <begin position="31"/>
        <end position="41"/>
    </location>
</feature>
<feature type="disulfide bond" evidence="4">
    <location>
        <begin position="35"/>
        <end position="47"/>
    </location>
</feature>
<feature type="disulfide bond" evidence="4">
    <location>
        <begin position="49"/>
        <end position="67"/>
    </location>
</feature>
<feature type="disulfide bond" evidence="4">
    <location>
        <begin position="73"/>
        <end position="86"/>
    </location>
</feature>
<feature type="disulfide bond" evidence="4">
    <location>
        <begin position="80"/>
        <end position="95"/>
    </location>
</feature>
<feature type="disulfide bond" evidence="4">
    <location>
        <begin position="97"/>
        <end position="118"/>
    </location>
</feature>
<feature type="disulfide bond" evidence="4">
    <location>
        <begin position="169"/>
        <end position="182"/>
    </location>
</feature>
<feature type="disulfide bond" evidence="4">
    <location>
        <begin position="176"/>
        <end position="191"/>
    </location>
</feature>
<feature type="disulfide bond" evidence="4">
    <location>
        <begin position="193"/>
        <end position="212"/>
    </location>
</feature>
<feature type="disulfide bond" evidence="4">
    <location>
        <begin position="218"/>
        <end position="231"/>
    </location>
</feature>
<feature type="disulfide bond" evidence="4">
    <location>
        <begin position="225"/>
        <end position="240"/>
    </location>
</feature>
<feature type="disulfide bond" evidence="4">
    <location>
        <begin position="242"/>
        <end position="260"/>
    </location>
</feature>
<feature type="disulfide bond" evidence="5">
    <location>
        <begin position="482"/>
        <end position="507"/>
    </location>
</feature>
<feature type="disulfide bond" evidence="5">
    <location>
        <begin position="499"/>
        <end position="509"/>
    </location>
</feature>
<feature type="splice variant" id="VSP_009413" description="In isoform 2." evidence="11 12 13">
    <location>
        <begin position="120"/>
        <end position="213"/>
    </location>
</feature>
<feature type="splice variant" id="VSP_009414" description="In isoform 3." evidence="11 12">
    <location>
        <begin position="120"/>
        <end position="164"/>
    </location>
</feature>
<feature type="sequence conflict" description="In Ref. 1; CAB38246." evidence="14" ref="1">
    <original>G</original>
    <variation>S</variation>
    <location>
        <position position="3"/>
    </location>
</feature>
<feature type="sequence conflict" description="In Ref. 1; CAB38246." evidence="14" ref="1">
    <original>S</original>
    <variation>I</variation>
    <location>
        <position position="28"/>
    </location>
</feature>
<feature type="sequence conflict" description="In Ref. 3; AAH06676." evidence="14" ref="3">
    <original>Q</original>
    <variation>E</variation>
    <location>
        <position position="320"/>
    </location>
</feature>
<feature type="sequence conflict" description="In Ref. 2; AAF67800." evidence="14" ref="2">
    <original>F</original>
    <variation>S</variation>
    <location>
        <position position="506"/>
    </location>
</feature>
<feature type="sequence conflict" description="In Ref. 3; AAH06676." evidence="14" ref="3">
    <original>M</original>
    <variation>V</variation>
    <location>
        <position position="599"/>
    </location>
</feature>
<feature type="sequence conflict" description="In Ref. 3 and 4." evidence="14" ref="3 4">
    <original>A</original>
    <variation>S</variation>
    <location>
        <position position="726"/>
    </location>
</feature>
<feature type="sequence conflict" description="In Ref. 4; BAB25461." evidence="14" ref="4">
    <original>F</original>
    <variation>I</variation>
    <location>
        <position position="796"/>
    </location>
</feature>
<name>AGRE5_MOUSE</name>
<evidence type="ECO:0000250" key="1"/>
<evidence type="ECO:0000250" key="2">
    <source>
        <dbReference type="UniProtKB" id="P48960"/>
    </source>
</evidence>
<evidence type="ECO:0000255" key="3"/>
<evidence type="ECO:0000255" key="4">
    <source>
        <dbReference type="PROSITE-ProRule" id="PRU00076"/>
    </source>
</evidence>
<evidence type="ECO:0000255" key="5">
    <source>
        <dbReference type="PROSITE-ProRule" id="PRU00098"/>
    </source>
</evidence>
<evidence type="ECO:0000256" key="6">
    <source>
        <dbReference type="SAM" id="MobiDB-lite"/>
    </source>
</evidence>
<evidence type="ECO:0000269" key="7">
    <source>
    </source>
</evidence>
<evidence type="ECO:0000269" key="8">
    <source>
    </source>
</evidence>
<evidence type="ECO:0000269" key="9">
    <source>
    </source>
</evidence>
<evidence type="ECO:0000269" key="10">
    <source>
    </source>
</evidence>
<evidence type="ECO:0000303" key="11">
    <source>
    </source>
</evidence>
<evidence type="ECO:0000303" key="12">
    <source>
    </source>
</evidence>
<evidence type="ECO:0000303" key="13">
    <source>
    </source>
</evidence>
<evidence type="ECO:0000305" key="14"/>
<evidence type="ECO:0000312" key="15">
    <source>
        <dbReference type="MGI" id="MGI:1347095"/>
    </source>
</evidence>
<evidence type="ECO:0007744" key="16">
    <source>
    </source>
</evidence>
<protein>
    <recommendedName>
        <fullName evidence="15">Adhesion G protein-coupled receptor E5</fullName>
    </recommendedName>
    <alternativeName>
        <fullName evidence="2">Leukocyte antigen CD97</fullName>
    </alternativeName>
    <cdAntigenName>CD97</cdAntigenName>
    <component>
        <recommendedName>
            <fullName>Adhesion G protein-coupled receptor E5 subunit alpha</fullName>
        </recommendedName>
    </component>
    <component>
        <recommendedName>
            <fullName>Adhesion G protein-coupled receptor E5 subunit beta</fullName>
        </recommendedName>
    </component>
</protein>
<gene>
    <name evidence="15" type="primary">Adgre5</name>
    <name evidence="15" type="synonym">Cd97</name>
</gene>
<reference key="1">
    <citation type="journal article" date="2000" name="Int. Immunol.">
        <title>Molecular cloning and characterization of mouse CD97.</title>
        <authorList>
            <person name="Hamann J."/>
            <person name="van Zventer C."/>
            <person name="Bijl A."/>
            <person name="Molenaar C."/>
            <person name="Tesselaar K."/>
            <person name="van Lier R.A.W."/>
        </authorList>
    </citation>
    <scope>NUCLEOTIDE SEQUENCE [MRNA] (ISOFORMS 1; 2 AND 3)</scope>
</reference>
<reference key="2">
    <citation type="journal article" date="1999" name="Immunology">
        <title>Structural characterization of mouse CD97 and study of its specific interaction with the murine decay-accelerating factor (DAF, CD55).</title>
        <authorList>
            <person name="Qian Y.-M."/>
            <person name="Haino M."/>
            <person name="Kelly K."/>
            <person name="Song W.-C."/>
        </authorList>
    </citation>
    <scope>NUCLEOTIDE SEQUENCE [MRNA] (ISOFORMS 2 AND 3)</scope>
    <scope>INTERACTION WITH DAF</scope>
    <scope>SUBCELLULAR LOCATION</scope>
    <source>
        <tissue>Testis</tissue>
    </source>
</reference>
<reference key="3">
    <citation type="journal article" date="2004" name="Genome Res.">
        <title>The status, quality, and expansion of the NIH full-length cDNA project: the Mammalian Gene Collection (MGC).</title>
        <authorList>
            <consortium name="The MGC Project Team"/>
        </authorList>
    </citation>
    <scope>NUCLEOTIDE SEQUENCE [LARGE SCALE MRNA] (ISOFORM 2)</scope>
</reference>
<reference key="4">
    <citation type="journal article" date="2005" name="Science">
        <title>The transcriptional landscape of the mammalian genome.</title>
        <authorList>
            <person name="Carninci P."/>
            <person name="Kasukawa T."/>
            <person name="Katayama S."/>
            <person name="Gough J."/>
            <person name="Frith M.C."/>
            <person name="Maeda N."/>
            <person name="Oyama R."/>
            <person name="Ravasi T."/>
            <person name="Lenhard B."/>
            <person name="Wells C."/>
            <person name="Kodzius R."/>
            <person name="Shimokawa K."/>
            <person name="Bajic V.B."/>
            <person name="Brenner S.E."/>
            <person name="Batalov S."/>
            <person name="Forrest A.R."/>
            <person name="Zavolan M."/>
            <person name="Davis M.J."/>
            <person name="Wilming L.G."/>
            <person name="Aidinis V."/>
            <person name="Allen J.E."/>
            <person name="Ambesi-Impiombato A."/>
            <person name="Apweiler R."/>
            <person name="Aturaliya R.N."/>
            <person name="Bailey T.L."/>
            <person name="Bansal M."/>
            <person name="Baxter L."/>
            <person name="Beisel K.W."/>
            <person name="Bersano T."/>
            <person name="Bono H."/>
            <person name="Chalk A.M."/>
            <person name="Chiu K.P."/>
            <person name="Choudhary V."/>
            <person name="Christoffels A."/>
            <person name="Clutterbuck D.R."/>
            <person name="Crowe M.L."/>
            <person name="Dalla E."/>
            <person name="Dalrymple B.P."/>
            <person name="de Bono B."/>
            <person name="Della Gatta G."/>
            <person name="di Bernardo D."/>
            <person name="Down T."/>
            <person name="Engstrom P."/>
            <person name="Fagiolini M."/>
            <person name="Faulkner G."/>
            <person name="Fletcher C.F."/>
            <person name="Fukushima T."/>
            <person name="Furuno M."/>
            <person name="Futaki S."/>
            <person name="Gariboldi M."/>
            <person name="Georgii-Hemming P."/>
            <person name="Gingeras T.R."/>
            <person name="Gojobori T."/>
            <person name="Green R.E."/>
            <person name="Gustincich S."/>
            <person name="Harbers M."/>
            <person name="Hayashi Y."/>
            <person name="Hensch T.K."/>
            <person name="Hirokawa N."/>
            <person name="Hill D."/>
            <person name="Huminiecki L."/>
            <person name="Iacono M."/>
            <person name="Ikeo K."/>
            <person name="Iwama A."/>
            <person name="Ishikawa T."/>
            <person name="Jakt M."/>
            <person name="Kanapin A."/>
            <person name="Katoh M."/>
            <person name="Kawasawa Y."/>
            <person name="Kelso J."/>
            <person name="Kitamura H."/>
            <person name="Kitano H."/>
            <person name="Kollias G."/>
            <person name="Krishnan S.P."/>
            <person name="Kruger A."/>
            <person name="Kummerfeld S.K."/>
            <person name="Kurochkin I.V."/>
            <person name="Lareau L.F."/>
            <person name="Lazarevic D."/>
            <person name="Lipovich L."/>
            <person name="Liu J."/>
            <person name="Liuni S."/>
            <person name="McWilliam S."/>
            <person name="Madan Babu M."/>
            <person name="Madera M."/>
            <person name="Marchionni L."/>
            <person name="Matsuda H."/>
            <person name="Matsuzawa S."/>
            <person name="Miki H."/>
            <person name="Mignone F."/>
            <person name="Miyake S."/>
            <person name="Morris K."/>
            <person name="Mottagui-Tabar S."/>
            <person name="Mulder N."/>
            <person name="Nakano N."/>
            <person name="Nakauchi H."/>
            <person name="Ng P."/>
            <person name="Nilsson R."/>
            <person name="Nishiguchi S."/>
            <person name="Nishikawa S."/>
            <person name="Nori F."/>
            <person name="Ohara O."/>
            <person name="Okazaki Y."/>
            <person name="Orlando V."/>
            <person name="Pang K.C."/>
            <person name="Pavan W.J."/>
            <person name="Pavesi G."/>
            <person name="Pesole G."/>
            <person name="Petrovsky N."/>
            <person name="Piazza S."/>
            <person name="Reed J."/>
            <person name="Reid J.F."/>
            <person name="Ring B.Z."/>
            <person name="Ringwald M."/>
            <person name="Rost B."/>
            <person name="Ruan Y."/>
            <person name="Salzberg S.L."/>
            <person name="Sandelin A."/>
            <person name="Schneider C."/>
            <person name="Schoenbach C."/>
            <person name="Sekiguchi K."/>
            <person name="Semple C.A."/>
            <person name="Seno S."/>
            <person name="Sessa L."/>
            <person name="Sheng Y."/>
            <person name="Shibata Y."/>
            <person name="Shimada H."/>
            <person name="Shimada K."/>
            <person name="Silva D."/>
            <person name="Sinclair B."/>
            <person name="Sperling S."/>
            <person name="Stupka E."/>
            <person name="Sugiura K."/>
            <person name="Sultana R."/>
            <person name="Takenaka Y."/>
            <person name="Taki K."/>
            <person name="Tammoja K."/>
            <person name="Tan S.L."/>
            <person name="Tang S."/>
            <person name="Taylor M.S."/>
            <person name="Tegner J."/>
            <person name="Teichmann S.A."/>
            <person name="Ueda H.R."/>
            <person name="van Nimwegen E."/>
            <person name="Verardo R."/>
            <person name="Wei C.L."/>
            <person name="Yagi K."/>
            <person name="Yamanishi H."/>
            <person name="Zabarovsky E."/>
            <person name="Zhu S."/>
            <person name="Zimmer A."/>
            <person name="Hide W."/>
            <person name="Bult C."/>
            <person name="Grimmond S.M."/>
            <person name="Teasdale R.D."/>
            <person name="Liu E.T."/>
            <person name="Brusic V."/>
            <person name="Quackenbush J."/>
            <person name="Wahlestedt C."/>
            <person name="Mattick J.S."/>
            <person name="Hume D.A."/>
            <person name="Kai C."/>
            <person name="Sasaki D."/>
            <person name="Tomaru Y."/>
            <person name="Fukuda S."/>
            <person name="Kanamori-Katayama M."/>
            <person name="Suzuki M."/>
            <person name="Aoki J."/>
            <person name="Arakawa T."/>
            <person name="Iida J."/>
            <person name="Imamura K."/>
            <person name="Itoh M."/>
            <person name="Kato T."/>
            <person name="Kawaji H."/>
            <person name="Kawagashira N."/>
            <person name="Kawashima T."/>
            <person name="Kojima M."/>
            <person name="Kondo S."/>
            <person name="Konno H."/>
            <person name="Nakano K."/>
            <person name="Ninomiya N."/>
            <person name="Nishio T."/>
            <person name="Okada M."/>
            <person name="Plessy C."/>
            <person name="Shibata K."/>
            <person name="Shiraki T."/>
            <person name="Suzuki S."/>
            <person name="Tagami M."/>
            <person name="Waki K."/>
            <person name="Watahiki A."/>
            <person name="Okamura-Oho Y."/>
            <person name="Suzuki H."/>
            <person name="Kawai J."/>
            <person name="Hayashizaki Y."/>
        </authorList>
    </citation>
    <scope>NUCLEOTIDE SEQUENCE [LARGE SCALE MRNA] OF 607-818</scope>
    <source>
        <strain>C57BL/6J</strain>
        <tissue>Small intestine</tissue>
    </source>
</reference>
<reference key="5">
    <citation type="journal article" date="2004" name="J. Immunol.">
        <title>The epidermal growth factor-seven transmembrane (EGF-TM7) receptor CD97 is required for neutrophil migration and host defense.</title>
        <authorList>
            <person name="Leemans J.C."/>
            <person name="te Velde A.A."/>
            <person name="Florquin S."/>
            <person name="Bennink R.J."/>
            <person name="de Bruin K."/>
            <person name="van Lier R.A.W."/>
            <person name="van der Poll T."/>
            <person name="Hamann J."/>
        </authorList>
    </citation>
    <scope>FUNCTION</scope>
</reference>
<reference key="6">
    <citation type="journal article" date="2009" name="Mol. Cell. Proteomics">
        <title>The mouse C2C12 myoblast cell surface N-linked glycoproteome: identification, glycosite occupancy, and membrane orientation.</title>
        <authorList>
            <person name="Gundry R.L."/>
            <person name="Raginski K."/>
            <person name="Tarasova Y."/>
            <person name="Tchernyshyov I."/>
            <person name="Bausch-Fluck D."/>
            <person name="Elliott S.T."/>
            <person name="Boheler K.R."/>
            <person name="Van Eyk J.E."/>
            <person name="Wollscheid B."/>
        </authorList>
    </citation>
    <scope>GLYCOSYLATION [LARGE SCALE ANALYSIS] AT ASN-299; ASN-395 AND ASN-461</scope>
    <source>
        <tissue>Myoblast</tissue>
    </source>
</reference>
<reference key="7">
    <citation type="journal article" date="2009" name="Nat. Biotechnol.">
        <title>Mass-spectrometric identification and relative quantification of N-linked cell surface glycoproteins.</title>
        <authorList>
            <person name="Wollscheid B."/>
            <person name="Bausch-Fluck D."/>
            <person name="Henderson C."/>
            <person name="O'Brien R."/>
            <person name="Bibel M."/>
            <person name="Schiess R."/>
            <person name="Aebersold R."/>
            <person name="Watts J.D."/>
        </authorList>
    </citation>
    <scope>GLYCOSYLATION [LARGE SCALE ANALYSIS] AT ASN-299 AND ASN-395</scope>
</reference>
<reference key="8">
    <citation type="journal article" date="2010" name="Cell">
        <title>A tissue-specific atlas of mouse protein phosphorylation and expression.</title>
        <authorList>
            <person name="Huttlin E.L."/>
            <person name="Jedrychowski M.P."/>
            <person name="Elias J.E."/>
            <person name="Goswami T."/>
            <person name="Rad R."/>
            <person name="Beausoleil S.A."/>
            <person name="Villen J."/>
            <person name="Haas W."/>
            <person name="Sowa M.E."/>
            <person name="Gygi S.P."/>
        </authorList>
    </citation>
    <scope>PHOSPHORYLATION [LARGE SCALE ANALYSIS] AT SER-425 AND SER-814</scope>
    <scope>IDENTIFICATION BY MASS SPECTROMETRY [LARGE SCALE ANALYSIS]</scope>
    <source>
        <tissue>Lung</tissue>
        <tissue>Spleen</tissue>
    </source>
</reference>
<keyword id="KW-0025">Alternative splicing</keyword>
<keyword id="KW-0106">Calcium</keyword>
<keyword id="KW-0130">Cell adhesion</keyword>
<keyword id="KW-1003">Cell membrane</keyword>
<keyword id="KW-1015">Disulfide bond</keyword>
<keyword id="KW-0245">EGF-like domain</keyword>
<keyword id="KW-0297">G-protein coupled receptor</keyword>
<keyword id="KW-0325">Glycoprotein</keyword>
<keyword id="KW-0472">Membrane</keyword>
<keyword id="KW-0597">Phosphoprotein</keyword>
<keyword id="KW-0675">Receptor</keyword>
<keyword id="KW-1185">Reference proteome</keyword>
<keyword id="KW-0677">Repeat</keyword>
<keyword id="KW-0964">Secreted</keyword>
<keyword id="KW-0732">Signal</keyword>
<keyword id="KW-0807">Transducer</keyword>
<keyword id="KW-0812">Transmembrane</keyword>
<keyword id="KW-1133">Transmembrane helix</keyword>
<sequence length="818" mass="90413">MRGVRCPGLLVVCILLSLSGAGTQKAESKNCAKWCPINSKCVSNRSCVCKPGFSSEKELITNPAESCEDINECLLPGFSCGDFAMCKNSEGSYTCVCNLGYKLLSGAESFVNESENTCQASVNTGTTPVPSRIHTVTTAPGNLPEQTTTVHQTQMGDSEERTPKDVNECISGQNHCHQSTHCINKLGGYSCICRQGWKPVPGSPNGPVSTVCEDVDECSSGQHQCHNSTVCKNTVGSYKCHCRPGWKPTSGSLRGPDTICQEPPFPTWTLLPTAHSQTLLRFSVEVQNLLRDFNPATVNYTIQKLIEAVDKLLEDPMETQTQQVAAQLLSNLEQSLRTLAQFLPKGPFTYTSPSNTELSLMVKEQDNKDVTTVHHGQTWMELDWAVTAGAKISENGSSVAGILSSPNMEKLLGNTPLNLEQRRASLEDFYGSPIPSVSLKLLSNINSVFLTNTNTEKLASNVTFKFDFTSVESIEPRHELICAFWKAHNGNGYWDTDGCSMNGTGFCHCNHLTSFAILMAQYHVQDPRLELITKVGLLLSLICLLLCILTFLLVKPIQSSRTMVHLHLCICLFLGSIIFLVGVENEGGEVGLRCRLVAMMLHFCFLAAFCWMALEGVELYFLVVRVFQGQGLSTWQRCLIGYGVPLLIVAISMAVVKMDGYGHATYCWLDFRKQGFLWSFSGPVAFIIFCNAAIFVITVWKLTKKFSEINPNMKKLRKARVLTITAIAQLLVLGCTWGFGLFLFNPHSTWLSYIFTLLNCLQGLFLYVMLCLLNKKVREEYWKWACMVTGSKYTEFNSSTTGTGTSQTRALRSSESGM</sequence>
<proteinExistence type="evidence at protein level"/>
<dbReference type="EMBL" id="Y18365">
    <property type="protein sequence ID" value="CAB38246.1"/>
    <property type="molecule type" value="mRNA"/>
</dbReference>
<dbReference type="EMBL" id="AF146344">
    <property type="protein sequence ID" value="AAF67800.1"/>
    <property type="molecule type" value="mRNA"/>
</dbReference>
<dbReference type="EMBL" id="BC006676">
    <property type="protein sequence ID" value="AAH06676.1"/>
    <property type="molecule type" value="mRNA"/>
</dbReference>
<dbReference type="EMBL" id="AK008101">
    <property type="protein sequence ID" value="BAB25461.1"/>
    <property type="molecule type" value="mRNA"/>
</dbReference>
<dbReference type="CCDS" id="CCDS22461.1">
    <molecule id="Q9Z0M6-1"/>
</dbReference>
<dbReference type="CCDS" id="CCDS52610.1">
    <molecule id="Q9Z0M6-2"/>
</dbReference>
<dbReference type="CCDS" id="CCDS52611.1">
    <molecule id="Q9Z0M6-3"/>
</dbReference>
<dbReference type="RefSeq" id="NP_001156501.1">
    <property type="nucleotide sequence ID" value="NM_001163029.1"/>
</dbReference>
<dbReference type="SMR" id="Q9Z0M6"/>
<dbReference type="BioGRID" id="204924">
    <property type="interactions" value="13"/>
</dbReference>
<dbReference type="FunCoup" id="Q9Z0M6">
    <property type="interactions" value="169"/>
</dbReference>
<dbReference type="STRING" id="10090.ENSMUSP00000075240"/>
<dbReference type="MEROPS" id="P02.033"/>
<dbReference type="GlyCosmos" id="Q9Z0M6">
    <property type="glycosylation" value="7 sites, No reported glycans"/>
</dbReference>
<dbReference type="GlyGen" id="Q9Z0M6">
    <property type="glycosylation" value="8 sites, 3 N-linked glycans (3 sites)"/>
</dbReference>
<dbReference type="iPTMnet" id="Q9Z0M6"/>
<dbReference type="PhosphoSitePlus" id="Q9Z0M6"/>
<dbReference type="CPTAC" id="non-CPTAC-3898"/>
<dbReference type="PaxDb" id="10090-ENSMUSP00000075240"/>
<dbReference type="ProteomicsDB" id="265634">
    <molecule id="Q9Z0M6-1"/>
</dbReference>
<dbReference type="ProteomicsDB" id="265635">
    <molecule id="Q9Z0M6-2"/>
</dbReference>
<dbReference type="ProteomicsDB" id="265636">
    <molecule id="Q9Z0M6-3"/>
</dbReference>
<dbReference type="Pumba" id="Q9Z0M6"/>
<dbReference type="DNASU" id="26364"/>
<dbReference type="GeneID" id="26364"/>
<dbReference type="KEGG" id="mmu:26364"/>
<dbReference type="AGR" id="MGI:1347095"/>
<dbReference type="CTD" id="976"/>
<dbReference type="MGI" id="MGI:1347095">
    <property type="gene designation" value="Adgre5"/>
</dbReference>
<dbReference type="eggNOG" id="KOG4193">
    <property type="taxonomic scope" value="Eukaryota"/>
</dbReference>
<dbReference type="InParanoid" id="Q9Z0M6"/>
<dbReference type="OrthoDB" id="1100386at2759"/>
<dbReference type="PhylomeDB" id="Q9Z0M6"/>
<dbReference type="Reactome" id="R-MMU-373080">
    <property type="pathway name" value="Class B/2 (Secretin family receptors)"/>
</dbReference>
<dbReference type="Reactome" id="R-MMU-6798695">
    <property type="pathway name" value="Neutrophil degranulation"/>
</dbReference>
<dbReference type="BioGRID-ORCS" id="26364">
    <property type="hits" value="1 hit in 77 CRISPR screens"/>
</dbReference>
<dbReference type="PRO" id="PR:Q9Z0M6"/>
<dbReference type="Proteomes" id="UP000000589">
    <property type="component" value="Unplaced"/>
</dbReference>
<dbReference type="RNAct" id="Q9Z0M6">
    <property type="molecule type" value="protein"/>
</dbReference>
<dbReference type="GO" id="GO:0009897">
    <property type="term" value="C:external side of plasma membrane"/>
    <property type="evidence" value="ECO:0000314"/>
    <property type="project" value="MGI"/>
</dbReference>
<dbReference type="GO" id="GO:0005576">
    <property type="term" value="C:extracellular region"/>
    <property type="evidence" value="ECO:0007669"/>
    <property type="project" value="UniProtKB-SubCell"/>
</dbReference>
<dbReference type="GO" id="GO:0016020">
    <property type="term" value="C:membrane"/>
    <property type="evidence" value="ECO:0000304"/>
    <property type="project" value="MGI"/>
</dbReference>
<dbReference type="GO" id="GO:0005509">
    <property type="term" value="F:calcium ion binding"/>
    <property type="evidence" value="ECO:0007669"/>
    <property type="project" value="InterPro"/>
</dbReference>
<dbReference type="GO" id="GO:0004930">
    <property type="term" value="F:G protein-coupled receptor activity"/>
    <property type="evidence" value="ECO:0007669"/>
    <property type="project" value="UniProtKB-KW"/>
</dbReference>
<dbReference type="GO" id="GO:0004888">
    <property type="term" value="F:transmembrane signaling receptor activity"/>
    <property type="evidence" value="ECO:0000304"/>
    <property type="project" value="MGI"/>
</dbReference>
<dbReference type="GO" id="GO:0007155">
    <property type="term" value="P:cell adhesion"/>
    <property type="evidence" value="ECO:0007669"/>
    <property type="project" value="UniProtKB-KW"/>
</dbReference>
<dbReference type="GO" id="GO:0007166">
    <property type="term" value="P:cell surface receptor signaling pathway"/>
    <property type="evidence" value="ECO:0007669"/>
    <property type="project" value="InterPro"/>
</dbReference>
<dbReference type="GO" id="GO:0051965">
    <property type="term" value="P:positive regulation of synapse assembly"/>
    <property type="evidence" value="ECO:0000314"/>
    <property type="project" value="MGI"/>
</dbReference>
<dbReference type="CDD" id="cd00054">
    <property type="entry name" value="EGF_CA"/>
    <property type="match status" value="3"/>
</dbReference>
<dbReference type="FunFam" id="2.10.25.10:FF:000177">
    <property type="entry name" value="Adhesion G protein-coupled receptor E2"/>
    <property type="match status" value="1"/>
</dbReference>
<dbReference type="FunFam" id="2.10.25.10:FF:000216">
    <property type="entry name" value="Adhesion G protein-coupled receptor E2"/>
    <property type="match status" value="1"/>
</dbReference>
<dbReference type="FunFam" id="2.10.25.10:FF:000269">
    <property type="entry name" value="Adhesion G protein-coupled receptor E2"/>
    <property type="match status" value="2"/>
</dbReference>
<dbReference type="FunFam" id="1.20.1070.10:FF:000136">
    <property type="entry name" value="Adhesion G protein-coupled receptor E5"/>
    <property type="match status" value="1"/>
</dbReference>
<dbReference type="FunFam" id="2.60.220.50:FF:000007">
    <property type="entry name" value="Adhesion G protein-coupled receptor E5"/>
    <property type="match status" value="1"/>
</dbReference>
<dbReference type="Gene3D" id="2.60.220.50">
    <property type="match status" value="1"/>
</dbReference>
<dbReference type="Gene3D" id="2.10.25.10">
    <property type="entry name" value="Laminin"/>
    <property type="match status" value="4"/>
</dbReference>
<dbReference type="Gene3D" id="1.20.1070.10">
    <property type="entry name" value="Rhodopsin 7-helix transmembrane proteins"/>
    <property type="match status" value="1"/>
</dbReference>
<dbReference type="InterPro" id="IPR001881">
    <property type="entry name" value="EGF-like_Ca-bd_dom"/>
</dbReference>
<dbReference type="InterPro" id="IPR000742">
    <property type="entry name" value="EGF-like_dom"/>
</dbReference>
<dbReference type="InterPro" id="IPR000152">
    <property type="entry name" value="EGF-type_Asp/Asn_hydroxyl_site"/>
</dbReference>
<dbReference type="InterPro" id="IPR018097">
    <property type="entry name" value="EGF_Ca-bd_CS"/>
</dbReference>
<dbReference type="InterPro" id="IPR057244">
    <property type="entry name" value="GAIN_B"/>
</dbReference>
<dbReference type="InterPro" id="IPR046338">
    <property type="entry name" value="GAIN_dom_sf"/>
</dbReference>
<dbReference type="InterPro" id="IPR017981">
    <property type="entry name" value="GPCR_2-like_7TM"/>
</dbReference>
<dbReference type="InterPro" id="IPR003056">
    <property type="entry name" value="GPCR_2_ADGRE2_ADGRE5"/>
</dbReference>
<dbReference type="InterPro" id="IPR000832">
    <property type="entry name" value="GPCR_2_secretin-like"/>
</dbReference>
<dbReference type="InterPro" id="IPR000203">
    <property type="entry name" value="GPS"/>
</dbReference>
<dbReference type="InterPro" id="IPR049883">
    <property type="entry name" value="NOTCH1_EGF-like"/>
</dbReference>
<dbReference type="PANTHER" id="PTHR12011:SF348">
    <property type="entry name" value="ADHESION G PROTEIN-COUPLED RECEPTOR E5"/>
    <property type="match status" value="1"/>
</dbReference>
<dbReference type="PANTHER" id="PTHR12011">
    <property type="entry name" value="ADHESION G-PROTEIN COUPLED RECEPTOR"/>
    <property type="match status" value="1"/>
</dbReference>
<dbReference type="Pfam" id="PF00002">
    <property type="entry name" value="7tm_2"/>
    <property type="match status" value="1"/>
</dbReference>
<dbReference type="Pfam" id="PF07645">
    <property type="entry name" value="EGF_CA"/>
    <property type="match status" value="3"/>
</dbReference>
<dbReference type="Pfam" id="PF01825">
    <property type="entry name" value="GPS"/>
    <property type="match status" value="1"/>
</dbReference>
<dbReference type="PRINTS" id="PR01278">
    <property type="entry name" value="CD97PROTEIN"/>
</dbReference>
<dbReference type="PRINTS" id="PR00249">
    <property type="entry name" value="GPCRSECRETIN"/>
</dbReference>
<dbReference type="SMART" id="SM00181">
    <property type="entry name" value="EGF"/>
    <property type="match status" value="4"/>
</dbReference>
<dbReference type="SMART" id="SM00179">
    <property type="entry name" value="EGF_CA"/>
    <property type="match status" value="3"/>
</dbReference>
<dbReference type="SMART" id="SM00303">
    <property type="entry name" value="GPS"/>
    <property type="match status" value="1"/>
</dbReference>
<dbReference type="SUPFAM" id="SSF57196">
    <property type="entry name" value="EGF/Laminin"/>
    <property type="match status" value="3"/>
</dbReference>
<dbReference type="SUPFAM" id="SSF81321">
    <property type="entry name" value="Family A G protein-coupled receptor-like"/>
    <property type="match status" value="1"/>
</dbReference>
<dbReference type="PROSITE" id="PS00010">
    <property type="entry name" value="ASX_HYDROXYL"/>
    <property type="match status" value="3"/>
</dbReference>
<dbReference type="PROSITE" id="PS50026">
    <property type="entry name" value="EGF_3"/>
    <property type="match status" value="3"/>
</dbReference>
<dbReference type="PROSITE" id="PS01187">
    <property type="entry name" value="EGF_CA"/>
    <property type="match status" value="3"/>
</dbReference>
<dbReference type="PROSITE" id="PS50261">
    <property type="entry name" value="G_PROTEIN_RECEP_F2_4"/>
    <property type="match status" value="1"/>
</dbReference>
<dbReference type="PROSITE" id="PS50221">
    <property type="entry name" value="GAIN_B"/>
    <property type="match status" value="1"/>
</dbReference>